<reference evidence="11 12" key="1">
    <citation type="journal article" date="1998" name="Genes Dev.">
        <title>A novel, putative MEK kinase controls developmental timing and spatial patterning in Dictyostelium and is regulated by ubiquitin-mediated protein degradation.</title>
        <authorList>
            <person name="Chung C.Y."/>
            <person name="Reddy T.B.K."/>
            <person name="Zhou K."/>
            <person name="Firtel R.A."/>
        </authorList>
    </citation>
    <scope>NUCLEOTIDE SEQUENCE [MRNA]</scope>
    <scope>FUNCTION</scope>
    <scope>INTERACTION WITH UBC AND UPC</scope>
    <scope>SUBCELLULAR LOCATION</scope>
    <scope>UBIQUITINATION</scope>
    <scope>DISRUPTION PHENOTYPE</scope>
    <source>
        <strain evidence="12">AX3-1</strain>
    </source>
</reference>
<reference evidence="13" key="2">
    <citation type="journal article" date="2005" name="Nature">
        <title>The genome of the social amoeba Dictyostelium discoideum.</title>
        <authorList>
            <person name="Eichinger L."/>
            <person name="Pachebat J.A."/>
            <person name="Gloeckner G."/>
            <person name="Rajandream M.A."/>
            <person name="Sucgang R."/>
            <person name="Berriman M."/>
            <person name="Song J."/>
            <person name="Olsen R."/>
            <person name="Szafranski K."/>
            <person name="Xu Q."/>
            <person name="Tunggal B."/>
            <person name="Kummerfeld S."/>
            <person name="Madera M."/>
            <person name="Konfortov B.A."/>
            <person name="Rivero F."/>
            <person name="Bankier A.T."/>
            <person name="Lehmann R."/>
            <person name="Hamlin N."/>
            <person name="Davies R."/>
            <person name="Gaudet P."/>
            <person name="Fey P."/>
            <person name="Pilcher K."/>
            <person name="Chen G."/>
            <person name="Saunders D."/>
            <person name="Sodergren E.J."/>
            <person name="Davis P."/>
            <person name="Kerhornou A."/>
            <person name="Nie X."/>
            <person name="Hall N."/>
            <person name="Anjard C."/>
            <person name="Hemphill L."/>
            <person name="Bason N."/>
            <person name="Farbrother P."/>
            <person name="Desany B."/>
            <person name="Just E."/>
            <person name="Morio T."/>
            <person name="Rost R."/>
            <person name="Churcher C.M."/>
            <person name="Cooper J."/>
            <person name="Haydock S."/>
            <person name="van Driessche N."/>
            <person name="Cronin A."/>
            <person name="Goodhead I."/>
            <person name="Muzny D.M."/>
            <person name="Mourier T."/>
            <person name="Pain A."/>
            <person name="Lu M."/>
            <person name="Harper D."/>
            <person name="Lindsay R."/>
            <person name="Hauser H."/>
            <person name="James K.D."/>
            <person name="Quiles M."/>
            <person name="Madan Babu M."/>
            <person name="Saito T."/>
            <person name="Buchrieser C."/>
            <person name="Wardroper A."/>
            <person name="Felder M."/>
            <person name="Thangavelu M."/>
            <person name="Johnson D."/>
            <person name="Knights A."/>
            <person name="Loulseged H."/>
            <person name="Mungall K.L."/>
            <person name="Oliver K."/>
            <person name="Price C."/>
            <person name="Quail M.A."/>
            <person name="Urushihara H."/>
            <person name="Hernandez J."/>
            <person name="Rabbinowitsch E."/>
            <person name="Steffen D."/>
            <person name="Sanders M."/>
            <person name="Ma J."/>
            <person name="Kohara Y."/>
            <person name="Sharp S."/>
            <person name="Simmonds M.N."/>
            <person name="Spiegler S."/>
            <person name="Tivey A."/>
            <person name="Sugano S."/>
            <person name="White B."/>
            <person name="Walker D."/>
            <person name="Woodward J.R."/>
            <person name="Winckler T."/>
            <person name="Tanaka Y."/>
            <person name="Shaulsky G."/>
            <person name="Schleicher M."/>
            <person name="Weinstock G.M."/>
            <person name="Rosenthal A."/>
            <person name="Cox E.C."/>
            <person name="Chisholm R.L."/>
            <person name="Gibbs R.A."/>
            <person name="Loomis W.F."/>
            <person name="Platzer M."/>
            <person name="Kay R.R."/>
            <person name="Williams J.G."/>
            <person name="Dear P.H."/>
            <person name="Noegel A.A."/>
            <person name="Barrell B.G."/>
            <person name="Kuspa A."/>
        </authorList>
    </citation>
    <scope>NUCLEOTIDE SEQUENCE [LARGE SCALE GENOMIC DNA]</scope>
    <source>
        <strain>AX4</strain>
    </source>
</reference>
<dbReference type="EC" id="2.7.11.25"/>
<dbReference type="EMBL" id="AF093689">
    <property type="protein sequence ID" value="AAC97114.1"/>
    <property type="molecule type" value="mRNA"/>
</dbReference>
<dbReference type="EMBL" id="AAFI02000052">
    <property type="protein sequence ID" value="EAL65773.2"/>
    <property type="status" value="ALT_SEQ"/>
    <property type="molecule type" value="Genomic_DNA"/>
</dbReference>
<dbReference type="RefSeq" id="XP_639165.2">
    <property type="nucleotide sequence ID" value="XM_634073.2"/>
</dbReference>
<dbReference type="SMR" id="Q54R82"/>
<dbReference type="FunCoup" id="Q54R82">
    <property type="interactions" value="595"/>
</dbReference>
<dbReference type="STRING" id="44689.Q54R82"/>
<dbReference type="EnsemblProtists" id="EAL65773">
    <property type="protein sequence ID" value="EAL65773"/>
    <property type="gene ID" value="DDB_G0283265"/>
</dbReference>
<dbReference type="GeneID" id="8624035"/>
<dbReference type="KEGG" id="ddi:DDB_G0283265"/>
<dbReference type="dictyBase" id="DDB_G0283265">
    <property type="gene designation" value="mkkA"/>
</dbReference>
<dbReference type="VEuPathDB" id="AmoebaDB:DDB_G0283265"/>
<dbReference type="eggNOG" id="KOG0198">
    <property type="taxonomic scope" value="Eukaryota"/>
</dbReference>
<dbReference type="eggNOG" id="KOG0274">
    <property type="taxonomic scope" value="Eukaryota"/>
</dbReference>
<dbReference type="InParanoid" id="Q54R82"/>
<dbReference type="PRO" id="PR:Q54R82"/>
<dbReference type="Proteomes" id="UP000002195">
    <property type="component" value="Chromosome 4"/>
</dbReference>
<dbReference type="GO" id="GO:0005938">
    <property type="term" value="C:cell cortex"/>
    <property type="evidence" value="ECO:0000314"/>
    <property type="project" value="dictyBase"/>
</dbReference>
<dbReference type="GO" id="GO:0005737">
    <property type="term" value="C:cytoplasm"/>
    <property type="evidence" value="ECO:0000318"/>
    <property type="project" value="GO_Central"/>
</dbReference>
<dbReference type="GO" id="GO:0016020">
    <property type="term" value="C:membrane"/>
    <property type="evidence" value="ECO:0007669"/>
    <property type="project" value="UniProtKB-SubCell"/>
</dbReference>
<dbReference type="GO" id="GO:0005524">
    <property type="term" value="F:ATP binding"/>
    <property type="evidence" value="ECO:0007669"/>
    <property type="project" value="UniProtKB-KW"/>
</dbReference>
<dbReference type="GO" id="GO:0004709">
    <property type="term" value="F:MAP kinase kinase kinase activity"/>
    <property type="evidence" value="ECO:0007669"/>
    <property type="project" value="UniProtKB-EC"/>
</dbReference>
<dbReference type="GO" id="GO:0046872">
    <property type="term" value="F:metal ion binding"/>
    <property type="evidence" value="ECO:0007669"/>
    <property type="project" value="UniProtKB-KW"/>
</dbReference>
<dbReference type="GO" id="GO:0106310">
    <property type="term" value="F:protein serine kinase activity"/>
    <property type="evidence" value="ECO:0007669"/>
    <property type="project" value="RHEA"/>
</dbReference>
<dbReference type="GO" id="GO:0004674">
    <property type="term" value="F:protein serine/threonine kinase activity"/>
    <property type="evidence" value="ECO:0000318"/>
    <property type="project" value="GO_Central"/>
</dbReference>
<dbReference type="GO" id="GO:0009653">
    <property type="term" value="P:anatomical structure morphogenesis"/>
    <property type="evidence" value="ECO:0000315"/>
    <property type="project" value="dictyBase"/>
</dbReference>
<dbReference type="GO" id="GO:0035556">
    <property type="term" value="P:intracellular signal transduction"/>
    <property type="evidence" value="ECO:0000318"/>
    <property type="project" value="GO_Central"/>
</dbReference>
<dbReference type="GO" id="GO:0030587">
    <property type="term" value="P:sorocarp development"/>
    <property type="evidence" value="ECO:0000315"/>
    <property type="project" value="dictyBase"/>
</dbReference>
<dbReference type="GO" id="GO:0030435">
    <property type="term" value="P:sporulation resulting in formation of a cellular spore"/>
    <property type="evidence" value="ECO:0007669"/>
    <property type="project" value="UniProtKB-KW"/>
</dbReference>
<dbReference type="CDD" id="cd05992">
    <property type="entry name" value="PB1"/>
    <property type="match status" value="1"/>
</dbReference>
<dbReference type="CDD" id="cd06606">
    <property type="entry name" value="STKc_MAPKKK"/>
    <property type="match status" value="1"/>
</dbReference>
<dbReference type="CDD" id="cd00200">
    <property type="entry name" value="WD40"/>
    <property type="match status" value="1"/>
</dbReference>
<dbReference type="FunFam" id="1.10.510.10:FF:000182">
    <property type="entry name" value="MAP kinase kinase kinase mkh1"/>
    <property type="match status" value="1"/>
</dbReference>
<dbReference type="FunFam" id="2.130.10.10:FF:002477">
    <property type="entry name" value="Mitogen-activated protein kinase kinase kinase A"/>
    <property type="match status" value="1"/>
</dbReference>
<dbReference type="FunFam" id="3.30.200.20:FF:000387">
    <property type="entry name" value="Serine/threonine-protein kinase STE11"/>
    <property type="match status" value="1"/>
</dbReference>
<dbReference type="Gene3D" id="1.20.1280.50">
    <property type="match status" value="1"/>
</dbReference>
<dbReference type="Gene3D" id="3.10.20.90">
    <property type="entry name" value="Phosphatidylinositol 3-kinase Catalytic Subunit, Chain A, domain 1"/>
    <property type="match status" value="1"/>
</dbReference>
<dbReference type="Gene3D" id="1.10.510.10">
    <property type="entry name" value="Transferase(Phosphotransferase) domain 1"/>
    <property type="match status" value="1"/>
</dbReference>
<dbReference type="Gene3D" id="2.130.10.10">
    <property type="entry name" value="YVTN repeat-like/Quinoprotein amine dehydrogenase"/>
    <property type="match status" value="3"/>
</dbReference>
<dbReference type="InterPro" id="IPR036047">
    <property type="entry name" value="F-box-like_dom_sf"/>
</dbReference>
<dbReference type="InterPro" id="IPR001810">
    <property type="entry name" value="F-box_dom"/>
</dbReference>
<dbReference type="InterPro" id="IPR020472">
    <property type="entry name" value="G-protein_beta_WD-40_rep"/>
</dbReference>
<dbReference type="InterPro" id="IPR011009">
    <property type="entry name" value="Kinase-like_dom_sf"/>
</dbReference>
<dbReference type="InterPro" id="IPR053793">
    <property type="entry name" value="PB1-like"/>
</dbReference>
<dbReference type="InterPro" id="IPR000270">
    <property type="entry name" value="PB1_dom"/>
</dbReference>
<dbReference type="InterPro" id="IPR000719">
    <property type="entry name" value="Prot_kinase_dom"/>
</dbReference>
<dbReference type="InterPro" id="IPR017441">
    <property type="entry name" value="Protein_kinase_ATP_BS"/>
</dbReference>
<dbReference type="InterPro" id="IPR008271">
    <property type="entry name" value="Ser/Thr_kinase_AS"/>
</dbReference>
<dbReference type="InterPro" id="IPR015943">
    <property type="entry name" value="WD40/YVTN_repeat-like_dom_sf"/>
</dbReference>
<dbReference type="InterPro" id="IPR019775">
    <property type="entry name" value="WD40_repeat_CS"/>
</dbReference>
<dbReference type="InterPro" id="IPR036322">
    <property type="entry name" value="WD40_repeat_dom_sf"/>
</dbReference>
<dbReference type="InterPro" id="IPR001680">
    <property type="entry name" value="WD40_rpt"/>
</dbReference>
<dbReference type="PANTHER" id="PTHR11584:SF369">
    <property type="entry name" value="MITOGEN-ACTIVATED PROTEIN KINASE KINASE KINASE 19-RELATED"/>
    <property type="match status" value="1"/>
</dbReference>
<dbReference type="PANTHER" id="PTHR11584">
    <property type="entry name" value="SERINE/THREONINE PROTEIN KINASE"/>
    <property type="match status" value="1"/>
</dbReference>
<dbReference type="Pfam" id="PF12937">
    <property type="entry name" value="F-box-like"/>
    <property type="match status" value="1"/>
</dbReference>
<dbReference type="Pfam" id="PF00564">
    <property type="entry name" value="PB1"/>
    <property type="match status" value="1"/>
</dbReference>
<dbReference type="Pfam" id="PF00069">
    <property type="entry name" value="Pkinase"/>
    <property type="match status" value="1"/>
</dbReference>
<dbReference type="Pfam" id="PF00400">
    <property type="entry name" value="WD40"/>
    <property type="match status" value="6"/>
</dbReference>
<dbReference type="PRINTS" id="PR00320">
    <property type="entry name" value="GPROTEINBRPT"/>
</dbReference>
<dbReference type="SMART" id="SM00256">
    <property type="entry name" value="FBOX"/>
    <property type="match status" value="1"/>
</dbReference>
<dbReference type="SMART" id="SM00666">
    <property type="entry name" value="PB1"/>
    <property type="match status" value="1"/>
</dbReference>
<dbReference type="SMART" id="SM00220">
    <property type="entry name" value="S_TKc"/>
    <property type="match status" value="1"/>
</dbReference>
<dbReference type="SMART" id="SM00320">
    <property type="entry name" value="WD40"/>
    <property type="match status" value="7"/>
</dbReference>
<dbReference type="SUPFAM" id="SSF54277">
    <property type="entry name" value="CAD &amp; PB1 domains"/>
    <property type="match status" value="1"/>
</dbReference>
<dbReference type="SUPFAM" id="SSF81383">
    <property type="entry name" value="F-box domain"/>
    <property type="match status" value="1"/>
</dbReference>
<dbReference type="SUPFAM" id="SSF56112">
    <property type="entry name" value="Protein kinase-like (PK-like)"/>
    <property type="match status" value="1"/>
</dbReference>
<dbReference type="SUPFAM" id="SSF50978">
    <property type="entry name" value="WD40 repeat-like"/>
    <property type="match status" value="1"/>
</dbReference>
<dbReference type="PROSITE" id="PS50181">
    <property type="entry name" value="FBOX"/>
    <property type="match status" value="1"/>
</dbReference>
<dbReference type="PROSITE" id="PS51745">
    <property type="entry name" value="PB1"/>
    <property type="match status" value="1"/>
</dbReference>
<dbReference type="PROSITE" id="PS00107">
    <property type="entry name" value="PROTEIN_KINASE_ATP"/>
    <property type="match status" value="1"/>
</dbReference>
<dbReference type="PROSITE" id="PS50011">
    <property type="entry name" value="PROTEIN_KINASE_DOM"/>
    <property type="match status" value="1"/>
</dbReference>
<dbReference type="PROSITE" id="PS00108">
    <property type="entry name" value="PROTEIN_KINASE_ST"/>
    <property type="match status" value="1"/>
</dbReference>
<dbReference type="PROSITE" id="PS00678">
    <property type="entry name" value="WD_REPEATS_1"/>
    <property type="match status" value="4"/>
</dbReference>
<dbReference type="PROSITE" id="PS50082">
    <property type="entry name" value="WD_REPEATS_2"/>
    <property type="match status" value="5"/>
</dbReference>
<dbReference type="PROSITE" id="PS50294">
    <property type="entry name" value="WD_REPEATS_REGION"/>
    <property type="match status" value="1"/>
</dbReference>
<protein>
    <recommendedName>
        <fullName evidence="10">Mitogen-activated protein kinase kinase kinase A</fullName>
        <ecNumber>2.7.11.25</ecNumber>
    </recommendedName>
    <alternativeName>
        <fullName>MAPK/ERK kinase 1</fullName>
        <shortName evidence="12">MEK kinase 1</shortName>
        <shortName evidence="12">MEKK 1</shortName>
    </alternativeName>
    <alternativeName>
        <fullName>MAPK/ERK kinase A</fullName>
        <shortName evidence="10">MEK kinase A</shortName>
        <shortName evidence="10">MEKK A</shortName>
        <shortName evidence="10">MEKKalpha</shortName>
    </alternativeName>
</protein>
<comment type="function">
    <text evidence="9">Regulates cell-type differentiation and spatial patterning, required for the proper induction and maintenance of prespore cell differentiation.</text>
</comment>
<comment type="catalytic activity">
    <reaction evidence="2">
        <text>L-seryl-[protein] + ATP = O-phospho-L-seryl-[protein] + ADP + H(+)</text>
        <dbReference type="Rhea" id="RHEA:17989"/>
        <dbReference type="Rhea" id="RHEA-COMP:9863"/>
        <dbReference type="Rhea" id="RHEA-COMP:11604"/>
        <dbReference type="ChEBI" id="CHEBI:15378"/>
        <dbReference type="ChEBI" id="CHEBI:29999"/>
        <dbReference type="ChEBI" id="CHEBI:30616"/>
        <dbReference type="ChEBI" id="CHEBI:83421"/>
        <dbReference type="ChEBI" id="CHEBI:456216"/>
        <dbReference type="EC" id="2.7.11.25"/>
    </reaction>
</comment>
<comment type="catalytic activity">
    <reaction evidence="2">
        <text>L-threonyl-[protein] + ATP = O-phospho-L-threonyl-[protein] + ADP + H(+)</text>
        <dbReference type="Rhea" id="RHEA:46608"/>
        <dbReference type="Rhea" id="RHEA-COMP:11060"/>
        <dbReference type="Rhea" id="RHEA-COMP:11605"/>
        <dbReference type="ChEBI" id="CHEBI:15378"/>
        <dbReference type="ChEBI" id="CHEBI:30013"/>
        <dbReference type="ChEBI" id="CHEBI:30616"/>
        <dbReference type="ChEBI" id="CHEBI:61977"/>
        <dbReference type="ChEBI" id="CHEBI:456216"/>
        <dbReference type="EC" id="2.7.11.25"/>
    </reaction>
</comment>
<comment type="cofactor">
    <cofactor evidence="2">
        <name>Mg(2+)</name>
        <dbReference type="ChEBI" id="CHEBI:18420"/>
    </cofactor>
</comment>
<comment type="subunit">
    <text evidence="9">Interacts with ubcB and ubpB.</text>
</comment>
<comment type="subcellular location">
    <subcellularLocation>
        <location evidence="3">Membrane</location>
        <topology evidence="3">Single-pass membrane protein</topology>
    </subcellularLocation>
    <text evidence="3 9">Localized predominantly at the periphery of the cells, possibly in the cortex or the plasma membrane.</text>
</comment>
<comment type="PTM">
    <text evidence="9">ubcB and ubpB differentially control ubiquitination/deubiquitination and degradation in a cell-type-specific and temporally regulated manner.</text>
</comment>
<comment type="disruption phenotype">
    <text evidence="9">Cells develop precociously and exhibit abnormal cell-type patterning with an increase in the pstO prestalk compartment, a concomitant reduction in the prespore domain, and a loss of the sharp compartment boundaries, resulting in overlapping prestalk and prespore domains.</text>
</comment>
<comment type="similarity">
    <text evidence="11">Belongs to the protein kinase superfamily. STE Ser/Thr protein kinase family. MAP kinase kinase kinase subfamily.</text>
</comment>
<comment type="sequence caution" evidence="11">
    <conflict type="erroneous gene model prediction">
        <sequence resource="EMBL-CDS" id="EAL65773"/>
    </conflict>
</comment>
<evidence type="ECO:0000250" key="1">
    <source>
        <dbReference type="UniProtKB" id="P28523"/>
    </source>
</evidence>
<evidence type="ECO:0000250" key="2">
    <source>
        <dbReference type="UniProtKB" id="Q869N2"/>
    </source>
</evidence>
<evidence type="ECO:0000255" key="3"/>
<evidence type="ECO:0000255" key="4">
    <source>
        <dbReference type="PROSITE-ProRule" id="PRU00080"/>
    </source>
</evidence>
<evidence type="ECO:0000255" key="5">
    <source>
        <dbReference type="PROSITE-ProRule" id="PRU00159"/>
    </source>
</evidence>
<evidence type="ECO:0000255" key="6">
    <source>
        <dbReference type="PROSITE-ProRule" id="PRU01081"/>
    </source>
</evidence>
<evidence type="ECO:0000255" key="7">
    <source>
        <dbReference type="PROSITE-ProRule" id="PRU10027"/>
    </source>
</evidence>
<evidence type="ECO:0000256" key="8">
    <source>
        <dbReference type="SAM" id="MobiDB-lite"/>
    </source>
</evidence>
<evidence type="ECO:0000269" key="9">
    <source>
    </source>
</evidence>
<evidence type="ECO:0000303" key="10">
    <source>
    </source>
</evidence>
<evidence type="ECO:0000305" key="11"/>
<evidence type="ECO:0000312" key="12">
    <source>
        <dbReference type="EMBL" id="AAC97114.1"/>
    </source>
</evidence>
<evidence type="ECO:0000312" key="13">
    <source>
        <dbReference type="EMBL" id="EAL65773.2"/>
    </source>
</evidence>
<feature type="chain" id="PRO_0000371250" description="Mitogen-activated protein kinase kinase kinase A">
    <location>
        <begin position="1"/>
        <end position="942"/>
    </location>
</feature>
<feature type="transmembrane region" description="Helical" evidence="3">
    <location>
        <begin position="513"/>
        <end position="533"/>
    </location>
</feature>
<feature type="domain" description="PB1" evidence="6">
    <location>
        <begin position="15"/>
        <end position="96"/>
    </location>
</feature>
<feature type="domain" description="Protein kinase" evidence="5">
    <location>
        <begin position="170"/>
        <end position="429"/>
    </location>
</feature>
<feature type="domain" description="F-box" evidence="4">
    <location>
        <begin position="518"/>
        <end position="564"/>
    </location>
</feature>
<feature type="repeat" description="WD 1" evidence="3">
    <location>
        <begin position="607"/>
        <end position="646"/>
    </location>
</feature>
<feature type="repeat" description="WD 2" evidence="3">
    <location>
        <begin position="690"/>
        <end position="733"/>
    </location>
</feature>
<feature type="repeat" description="WD 3" evidence="3">
    <location>
        <begin position="736"/>
        <end position="778"/>
    </location>
</feature>
<feature type="repeat" description="WD 4" evidence="3">
    <location>
        <begin position="780"/>
        <end position="825"/>
    </location>
</feature>
<feature type="repeat" description="WD 5" evidence="3">
    <location>
        <begin position="828"/>
        <end position="865"/>
    </location>
</feature>
<feature type="repeat" description="WD 6" evidence="3">
    <location>
        <begin position="872"/>
        <end position="909"/>
    </location>
</feature>
<feature type="repeat" description="WD 7" evidence="3">
    <location>
        <begin position="912"/>
        <end position="942"/>
    </location>
</feature>
<feature type="region of interest" description="Disordered" evidence="8">
    <location>
        <begin position="107"/>
        <end position="144"/>
    </location>
</feature>
<feature type="region of interest" description="Disordered" evidence="8">
    <location>
        <begin position="441"/>
        <end position="512"/>
    </location>
</feature>
<feature type="compositionally biased region" description="Low complexity" evidence="8">
    <location>
        <begin position="441"/>
        <end position="486"/>
    </location>
</feature>
<feature type="compositionally biased region" description="Polar residues" evidence="8">
    <location>
        <begin position="487"/>
        <end position="498"/>
    </location>
</feature>
<feature type="compositionally biased region" description="Low complexity" evidence="8">
    <location>
        <begin position="500"/>
        <end position="512"/>
    </location>
</feature>
<feature type="active site" description="Proton acceptor" evidence="1 5 7">
    <location>
        <position position="297"/>
    </location>
</feature>
<feature type="binding site" evidence="1 5">
    <location>
        <begin position="176"/>
        <end position="184"/>
    </location>
    <ligand>
        <name>ATP</name>
        <dbReference type="ChEBI" id="CHEBI:30616"/>
    </ligand>
</feature>
<feature type="binding site" evidence="1 5">
    <location>
        <position position="199"/>
    </location>
    <ligand>
        <name>ATP</name>
        <dbReference type="ChEBI" id="CHEBI:30616"/>
    </ligand>
</feature>
<gene>
    <name evidence="13" type="primary">mkkA</name>
    <name type="ORF">DDB_G0283265</name>
</gene>
<accession>Q54R82</accession>
<accession>O96611</accession>
<keyword id="KW-0067">ATP-binding</keyword>
<keyword id="KW-0418">Kinase</keyword>
<keyword id="KW-0460">Magnesium</keyword>
<keyword id="KW-0472">Membrane</keyword>
<keyword id="KW-0479">Metal-binding</keyword>
<keyword id="KW-0547">Nucleotide-binding</keyword>
<keyword id="KW-1185">Reference proteome</keyword>
<keyword id="KW-0677">Repeat</keyword>
<keyword id="KW-0723">Serine/threonine-protein kinase</keyword>
<keyword id="KW-0749">Sporulation</keyword>
<keyword id="KW-0808">Transferase</keyword>
<keyword id="KW-0812">Transmembrane</keyword>
<keyword id="KW-1133">Transmembrane helix</keyword>
<keyword id="KW-0832">Ubl conjugation</keyword>
<keyword id="KW-0853">WD repeat</keyword>
<name>MKKA_DICDI</name>
<organism>
    <name type="scientific">Dictyostelium discoideum</name>
    <name type="common">Social amoeba</name>
    <dbReference type="NCBI Taxonomy" id="44689"/>
    <lineage>
        <taxon>Eukaryota</taxon>
        <taxon>Amoebozoa</taxon>
        <taxon>Evosea</taxon>
        <taxon>Eumycetozoa</taxon>
        <taxon>Dictyostelia</taxon>
        <taxon>Dictyosteliales</taxon>
        <taxon>Dictyosteliaceae</taxon>
        <taxon>Dictyostelium</taxon>
    </lineage>
</organism>
<proteinExistence type="evidence at protein level"/>
<sequence length="942" mass="105796">MSWLNNPSQNFVDPFIRIKCILGDDIRIIKFNSNISYGGLMNQLEQDFQCPISIHQYEDYEGDKVTVKSKDDIMEALTMYFELKALNPTKIISTKFFLKQLPPQSQPLSSSLSPTQSLILNNNNNNNNNNNNNNNNNNNNNNNNIIQHTDFPSLIINEHEELISNHNIKWQKGQILGRGGYGSVYLGLNKDTGELFAVKQLEIVDINSDPKLKNMILSFSKEIEVMRSLRHDNIVRYLGTSLDQSFLSVFLEYIPGGSISSLLGKFGAFSENVIKVYTKQILQGLSFLHANSIIHRDIKGANILIDTKGIVKLSDFGCSKSFSGIVSQFKSMQGTPYWMAPEVIKQTGHGRSSDIWSLGCVIVEMATAQPPWSNITELAAVMYHIASSNSIPNIPSHMSQEAFDFLNLCFKRDPKERPDANQLLKHPFIMNLDDNIQLPTISPTTTLSTNTTNTTATTTTTNNATNSNINQQQQQQQQQPPTRTQRVSISAGSSNNKRYTPPISTSTSSSSSSILNNFSINIILPINLIILIFREIKPNFVNTLSRVCKHWKQIIDDDELWNKYCSDRLINKSKFEESITWKSNYIKIYKQQKVWFHNKLNHSTLKGHDKGVFCVKLIDDQGMVLSGGEDKKLKVWDISGNHHHNHHSGIVGSISKKSGLNIINNNNSNNSNSSSNSSSSNSRYLFSLKGHSGCIKSVDYQRQSGSDVSRVFTASADFTCKIFSLKTKKTLFTYTNHQEAVTCINYLGDVENKCITSSLDKTIQLWDAETGSCLSTLRGHTGGIYCVKTDQVATHGNGYNHLVVSASVDKTSNVWDTRSSSKVRSFTQHTEDVLCCYVFDQKVVTGSCDGTIKLWDIGTGKTISTFIPSETRQKNYVWTVQFDQSKIISSGKTGIIRIWDIYNERDSRSIGGHHETIFSLQFNNQKLITGSLDKLVKIWSID</sequence>